<organism>
    <name type="scientific">Bos taurus</name>
    <name type="common">Bovine</name>
    <dbReference type="NCBI Taxonomy" id="9913"/>
    <lineage>
        <taxon>Eukaryota</taxon>
        <taxon>Metazoa</taxon>
        <taxon>Chordata</taxon>
        <taxon>Craniata</taxon>
        <taxon>Vertebrata</taxon>
        <taxon>Euteleostomi</taxon>
        <taxon>Mammalia</taxon>
        <taxon>Eutheria</taxon>
        <taxon>Laurasiatheria</taxon>
        <taxon>Artiodactyla</taxon>
        <taxon>Ruminantia</taxon>
        <taxon>Pecora</taxon>
        <taxon>Bovidae</taxon>
        <taxon>Bovinae</taxon>
        <taxon>Bos</taxon>
    </lineage>
</organism>
<feature type="chain" id="PRO_0000289589" description="Transcription factor GATA-5">
    <location>
        <begin position="1"/>
        <end position="403"/>
    </location>
</feature>
<feature type="zinc finger region" description="GATA-type 1" evidence="4">
    <location>
        <begin position="194"/>
        <end position="218"/>
    </location>
</feature>
<feature type="zinc finger region" description="GATA-type 2" evidence="4">
    <location>
        <begin position="248"/>
        <end position="272"/>
    </location>
</feature>
<feature type="region of interest" description="Disordered" evidence="5">
    <location>
        <begin position="72"/>
        <end position="111"/>
    </location>
</feature>
<feature type="region of interest" description="Disordered" evidence="5">
    <location>
        <begin position="291"/>
        <end position="360"/>
    </location>
</feature>
<feature type="compositionally biased region" description="Low complexity" evidence="5">
    <location>
        <begin position="72"/>
        <end position="82"/>
    </location>
</feature>
<feature type="compositionally biased region" description="Low complexity" evidence="5">
    <location>
        <begin position="90"/>
        <end position="100"/>
    </location>
</feature>
<feature type="compositionally biased region" description="Basic residues" evidence="5">
    <location>
        <begin position="294"/>
        <end position="303"/>
    </location>
</feature>
<evidence type="ECO:0000250" key="1"/>
<evidence type="ECO:0000250" key="2">
    <source>
        <dbReference type="UniProtKB" id="P97489"/>
    </source>
</evidence>
<evidence type="ECO:0000250" key="3">
    <source>
        <dbReference type="UniProtKB" id="Q9BWX5"/>
    </source>
</evidence>
<evidence type="ECO:0000255" key="4">
    <source>
        <dbReference type="PROSITE-ProRule" id="PRU00094"/>
    </source>
</evidence>
<evidence type="ECO:0000256" key="5">
    <source>
        <dbReference type="SAM" id="MobiDB-lite"/>
    </source>
</evidence>
<dbReference type="EMBL" id="BC102821">
    <property type="protein sequence ID" value="AAI02822.1"/>
    <property type="molecule type" value="mRNA"/>
</dbReference>
<dbReference type="RefSeq" id="NP_001029393.1">
    <property type="nucleotide sequence ID" value="NM_001034221.2"/>
</dbReference>
<dbReference type="SMR" id="Q3SZJ5"/>
<dbReference type="FunCoup" id="Q3SZJ5">
    <property type="interactions" value="4"/>
</dbReference>
<dbReference type="STRING" id="9913.ENSBTAP00000027184"/>
<dbReference type="PaxDb" id="9913-ENSBTAP00000027184"/>
<dbReference type="Ensembl" id="ENSBTAT00000027184.5">
    <property type="protein sequence ID" value="ENSBTAP00000027184.3"/>
    <property type="gene ID" value="ENSBTAG00000047944.3"/>
</dbReference>
<dbReference type="GeneID" id="504784"/>
<dbReference type="KEGG" id="bta:504784"/>
<dbReference type="CTD" id="140628"/>
<dbReference type="VEuPathDB" id="HostDB:ENSBTAG00000047944"/>
<dbReference type="VGNC" id="VGNC:29269">
    <property type="gene designation" value="GATA5"/>
</dbReference>
<dbReference type="eggNOG" id="KOG1601">
    <property type="taxonomic scope" value="Eukaryota"/>
</dbReference>
<dbReference type="GeneTree" id="ENSGT00940000160139"/>
<dbReference type="HOGENOM" id="CLU_027524_0_0_1"/>
<dbReference type="InParanoid" id="Q3SZJ5"/>
<dbReference type="OMA" id="FEPEDYA"/>
<dbReference type="OrthoDB" id="515401at2759"/>
<dbReference type="TreeFam" id="TF315391"/>
<dbReference type="Reactome" id="R-BTA-983231">
    <property type="pathway name" value="Factors involved in megakaryocyte development and platelet production"/>
</dbReference>
<dbReference type="Proteomes" id="UP000009136">
    <property type="component" value="Chromosome 13"/>
</dbReference>
<dbReference type="Bgee" id="ENSBTAG00000047944">
    <property type="expression patterns" value="Expressed in abomasum and 54 other cell types or tissues"/>
</dbReference>
<dbReference type="GO" id="GO:0000785">
    <property type="term" value="C:chromatin"/>
    <property type="evidence" value="ECO:0007669"/>
    <property type="project" value="Ensembl"/>
</dbReference>
<dbReference type="GO" id="GO:0005634">
    <property type="term" value="C:nucleus"/>
    <property type="evidence" value="ECO:0000318"/>
    <property type="project" value="GO_Central"/>
</dbReference>
<dbReference type="GO" id="GO:0000981">
    <property type="term" value="F:DNA-binding transcription factor activity, RNA polymerase II-specific"/>
    <property type="evidence" value="ECO:0000318"/>
    <property type="project" value="GO_Central"/>
</dbReference>
<dbReference type="GO" id="GO:0000978">
    <property type="term" value="F:RNA polymerase II cis-regulatory region sequence-specific DNA binding"/>
    <property type="evidence" value="ECO:0000318"/>
    <property type="project" value="GO_Central"/>
</dbReference>
<dbReference type="GO" id="GO:0008270">
    <property type="term" value="F:zinc ion binding"/>
    <property type="evidence" value="ECO:0007669"/>
    <property type="project" value="UniProtKB-KW"/>
</dbReference>
<dbReference type="GO" id="GO:0003180">
    <property type="term" value="P:aortic valve morphogenesis"/>
    <property type="evidence" value="ECO:0007669"/>
    <property type="project" value="Ensembl"/>
</dbReference>
<dbReference type="GO" id="GO:0048738">
    <property type="term" value="P:cardiac muscle tissue development"/>
    <property type="evidence" value="ECO:0000318"/>
    <property type="project" value="GO_Central"/>
</dbReference>
<dbReference type="GO" id="GO:0045165">
    <property type="term" value="P:cell fate commitment"/>
    <property type="evidence" value="ECO:0000318"/>
    <property type="project" value="GO_Central"/>
</dbReference>
<dbReference type="GO" id="GO:0071773">
    <property type="term" value="P:cellular response to BMP stimulus"/>
    <property type="evidence" value="ECO:0007669"/>
    <property type="project" value="Ensembl"/>
</dbReference>
<dbReference type="GO" id="GO:0003274">
    <property type="term" value="P:endocardial cushion fusion"/>
    <property type="evidence" value="ECO:0007669"/>
    <property type="project" value="Ensembl"/>
</dbReference>
<dbReference type="GO" id="GO:0003129">
    <property type="term" value="P:heart induction"/>
    <property type="evidence" value="ECO:0007669"/>
    <property type="project" value="Ensembl"/>
</dbReference>
<dbReference type="GO" id="GO:0060575">
    <property type="term" value="P:intestinal epithelial cell differentiation"/>
    <property type="evidence" value="ECO:0007669"/>
    <property type="project" value="Ensembl"/>
</dbReference>
<dbReference type="GO" id="GO:0010614">
    <property type="term" value="P:negative regulation of cardiac muscle hypertrophy"/>
    <property type="evidence" value="ECO:0007669"/>
    <property type="project" value="Ensembl"/>
</dbReference>
<dbReference type="GO" id="GO:0010629">
    <property type="term" value="P:negative regulation of gene expression"/>
    <property type="evidence" value="ECO:0007669"/>
    <property type="project" value="Ensembl"/>
</dbReference>
<dbReference type="GO" id="GO:0000122">
    <property type="term" value="P:negative regulation of transcription by RNA polymerase II"/>
    <property type="evidence" value="ECO:0000318"/>
    <property type="project" value="GO_Central"/>
</dbReference>
<dbReference type="GO" id="GO:0062000">
    <property type="term" value="P:positive regulation of cardiac endothelial to mesenchymal transition"/>
    <property type="evidence" value="ECO:0007669"/>
    <property type="project" value="Ensembl"/>
</dbReference>
<dbReference type="GO" id="GO:0010628">
    <property type="term" value="P:positive regulation of gene expression"/>
    <property type="evidence" value="ECO:0007669"/>
    <property type="project" value="Ensembl"/>
</dbReference>
<dbReference type="GO" id="GO:0045747">
    <property type="term" value="P:positive regulation of Notch signaling pathway"/>
    <property type="evidence" value="ECO:0007669"/>
    <property type="project" value="Ensembl"/>
</dbReference>
<dbReference type="GO" id="GO:0045944">
    <property type="term" value="P:positive regulation of transcription by RNA polymerase II"/>
    <property type="evidence" value="ECO:0000318"/>
    <property type="project" value="GO_Central"/>
</dbReference>
<dbReference type="CDD" id="cd00202">
    <property type="entry name" value="ZnF_GATA"/>
    <property type="match status" value="2"/>
</dbReference>
<dbReference type="FunFam" id="3.30.50.10:FF:000001">
    <property type="entry name" value="GATA transcription factor (GATAd)"/>
    <property type="match status" value="1"/>
</dbReference>
<dbReference type="FunFam" id="3.30.50.10:FF:000032">
    <property type="entry name" value="Transcription factor GATA-3"/>
    <property type="match status" value="1"/>
</dbReference>
<dbReference type="Gene3D" id="3.30.50.10">
    <property type="entry name" value="Erythroid Transcription Factor GATA-1, subunit A"/>
    <property type="match status" value="2"/>
</dbReference>
<dbReference type="InterPro" id="IPR008013">
    <property type="entry name" value="GATA_N"/>
</dbReference>
<dbReference type="InterPro" id="IPR016375">
    <property type="entry name" value="TF_GATA_4/5/6"/>
</dbReference>
<dbReference type="InterPro" id="IPR039355">
    <property type="entry name" value="Transcription_factor_GATA"/>
</dbReference>
<dbReference type="InterPro" id="IPR000679">
    <property type="entry name" value="Znf_GATA"/>
</dbReference>
<dbReference type="InterPro" id="IPR013088">
    <property type="entry name" value="Znf_NHR/GATA"/>
</dbReference>
<dbReference type="PANTHER" id="PTHR10071">
    <property type="entry name" value="TRANSCRIPTION FACTOR GATA FAMILY MEMBER"/>
    <property type="match status" value="1"/>
</dbReference>
<dbReference type="PANTHER" id="PTHR10071:SF289">
    <property type="entry name" value="TRANSCRIPTION FACTOR GATA-5"/>
    <property type="match status" value="1"/>
</dbReference>
<dbReference type="Pfam" id="PF00320">
    <property type="entry name" value="GATA"/>
    <property type="match status" value="2"/>
</dbReference>
<dbReference type="Pfam" id="PF05349">
    <property type="entry name" value="GATA-N"/>
    <property type="match status" value="1"/>
</dbReference>
<dbReference type="PIRSF" id="PIRSF003028">
    <property type="entry name" value="TF_GATA_4/5/6"/>
    <property type="match status" value="1"/>
</dbReference>
<dbReference type="PRINTS" id="PR00619">
    <property type="entry name" value="GATAZNFINGER"/>
</dbReference>
<dbReference type="SMART" id="SM00401">
    <property type="entry name" value="ZnF_GATA"/>
    <property type="match status" value="2"/>
</dbReference>
<dbReference type="SUPFAM" id="SSF57716">
    <property type="entry name" value="Glucocorticoid receptor-like (DNA-binding domain)"/>
    <property type="match status" value="2"/>
</dbReference>
<dbReference type="PROSITE" id="PS00344">
    <property type="entry name" value="GATA_ZN_FINGER_1"/>
    <property type="match status" value="2"/>
</dbReference>
<dbReference type="PROSITE" id="PS50114">
    <property type="entry name" value="GATA_ZN_FINGER_2"/>
    <property type="match status" value="2"/>
</dbReference>
<comment type="function">
    <text evidence="2 3">Transcription factor required during cardiovascular development. Plays an important role in the transcriptional program(s) that underlies smooth muscle cell diversity. Binds to the functionally important CEF-1 nuclear protein binding site in the cardiac-specific slow/cardiac troponin C transcriptional enhancer (By similarity).</text>
</comment>
<comment type="subcellular location">
    <subcellularLocation>
        <location evidence="1">Nucleus</location>
    </subcellularLocation>
</comment>
<protein>
    <recommendedName>
        <fullName>Transcription factor GATA-5</fullName>
    </recommendedName>
    <alternativeName>
        <fullName>GATA-binding factor 5</fullName>
    </alternativeName>
</protein>
<gene>
    <name evidence="3" type="primary">GATA5</name>
</gene>
<keyword id="KW-0010">Activator</keyword>
<keyword id="KW-0238">DNA-binding</keyword>
<keyword id="KW-0479">Metal-binding</keyword>
<keyword id="KW-0539">Nucleus</keyword>
<keyword id="KW-1185">Reference proteome</keyword>
<keyword id="KW-0677">Repeat</keyword>
<keyword id="KW-0804">Transcription</keyword>
<keyword id="KW-0805">Transcription regulation</keyword>
<keyword id="KW-0862">Zinc</keyword>
<keyword id="KW-0863">Zinc-finger</keyword>
<reference key="1">
    <citation type="submission" date="2005-08" db="EMBL/GenBank/DDBJ databases">
        <authorList>
            <consortium name="NIH - Mammalian Gene Collection (MGC) project"/>
        </authorList>
    </citation>
    <scope>NUCLEOTIDE SEQUENCE [LARGE SCALE MRNA]</scope>
    <source>
        <strain>Crossbred X Angus</strain>
        <tissue>Ileum</tissue>
    </source>
</reference>
<accession>Q3SZJ5</accession>
<proteinExistence type="evidence at transcript level"/>
<sequence>MYQSLALAPSPGQTAYADSGAFLHTPGAGSPVFVPPARVPSMLPYLPACEPGPQAPAITAHPGWAQAAAADSSAFGSGSPHAPAAPPPGTTAFPFAHSSPGPGGGTGTRDNGAFQGAMLAREQYPAALGRPVSSSYPTAYPAYMSAEVAPSWTSGPLDGSVLHSLQGLPAGLPGRRAPFAAELLEEFPGEGRECVNCGALSTPLWRRDGTGHYLCNACGLYHKMNGVNRPLVRPQKRLSSSRRAGLCCTNCHTTTTTLWRRNVDGEPVCNACGLYMKLHGVPRPLAMKKESIQTRKRKPKNIAKTKGSSGSSGHTTASPQASVPDPEVSAATLKPEPSLASPSCPGPSVTSQGSAQVDDPLAPSHLEFKFEPEDFALPSAALGQQAGLGGALRQEAWCALALA</sequence>
<name>GATA5_BOVIN</name>